<feature type="chain" id="PRO_0000204518" description="Small ribosomal subunit protein eS26">
    <location>
        <begin position="1"/>
        <end position="117"/>
    </location>
</feature>
<feature type="region of interest" description="Disordered" evidence="3">
    <location>
        <begin position="85"/>
        <end position="117"/>
    </location>
</feature>
<feature type="compositionally biased region" description="Basic and acidic residues" evidence="3">
    <location>
        <begin position="87"/>
        <end position="97"/>
    </location>
</feature>
<feature type="compositionally biased region" description="Low complexity" evidence="3">
    <location>
        <begin position="101"/>
        <end position="111"/>
    </location>
</feature>
<dbReference type="EMBL" id="Z92834">
    <property type="protein sequence ID" value="CAB07387.1"/>
    <property type="molecule type" value="Genomic_DNA"/>
</dbReference>
<dbReference type="PIR" id="T21988">
    <property type="entry name" value="T21988"/>
</dbReference>
<dbReference type="RefSeq" id="NP_001370049.1">
    <property type="nucleotide sequence ID" value="NM_001383766.2"/>
</dbReference>
<dbReference type="RefSeq" id="NP_493571.1">
    <property type="nucleotide sequence ID" value="NM_061170.5"/>
</dbReference>
<dbReference type="PDB" id="9BH5">
    <property type="method" value="EM"/>
    <property type="resolution" value="2.63 A"/>
    <property type="chains" value="Aa=1-117"/>
</dbReference>
<dbReference type="PDB" id="9CAI">
    <property type="method" value="EM"/>
    <property type="resolution" value="2.59 A"/>
    <property type="chains" value="Aa=1-117"/>
</dbReference>
<dbReference type="PDBsum" id="9BH5"/>
<dbReference type="PDBsum" id="9CAI"/>
<dbReference type="EMDB" id="EMD-44533"/>
<dbReference type="EMDB" id="EMD-45392"/>
<dbReference type="SMR" id="O45499"/>
<dbReference type="BioGRID" id="38727">
    <property type="interactions" value="89"/>
</dbReference>
<dbReference type="FunCoup" id="O45499">
    <property type="interactions" value="1472"/>
</dbReference>
<dbReference type="STRING" id="6239.F39B2.6.3"/>
<dbReference type="PaxDb" id="6239-F39B2.6.2"/>
<dbReference type="PeptideAtlas" id="O45499"/>
<dbReference type="EnsemblMetazoa" id="F39B2.6.1">
    <property type="protein sequence ID" value="F39B2.6.1"/>
    <property type="gene ID" value="WBGene00004495"/>
</dbReference>
<dbReference type="GeneID" id="173342"/>
<dbReference type="UCSC" id="F39B2.6.1">
    <property type="organism name" value="c. elegans"/>
</dbReference>
<dbReference type="AGR" id="WB:WBGene00004495"/>
<dbReference type="WormBase" id="F39B2.6">
    <property type="protein sequence ID" value="CE16012"/>
    <property type="gene ID" value="WBGene00004495"/>
    <property type="gene designation" value="rps-26"/>
</dbReference>
<dbReference type="eggNOG" id="KOG1768">
    <property type="taxonomic scope" value="Eukaryota"/>
</dbReference>
<dbReference type="GeneTree" id="ENSGT00390000002517"/>
<dbReference type="HOGENOM" id="CLU_129451_2_0_1"/>
<dbReference type="InParanoid" id="O45499"/>
<dbReference type="OMA" id="KCYCVSC"/>
<dbReference type="OrthoDB" id="10262653at2759"/>
<dbReference type="PhylomeDB" id="O45499"/>
<dbReference type="Reactome" id="R-CEL-156827">
    <property type="pathway name" value="L13a-mediated translational silencing of Ceruloplasmin expression"/>
</dbReference>
<dbReference type="Reactome" id="R-CEL-1799339">
    <property type="pathway name" value="SRP-dependent cotranslational protein targeting to membrane"/>
</dbReference>
<dbReference type="Reactome" id="R-CEL-72649">
    <property type="pathway name" value="Translation initiation complex formation"/>
</dbReference>
<dbReference type="Reactome" id="R-CEL-72689">
    <property type="pathway name" value="Formation of a pool of free 40S subunits"/>
</dbReference>
<dbReference type="Reactome" id="R-CEL-72695">
    <property type="pathway name" value="Formation of the ternary complex, and subsequently, the 43S complex"/>
</dbReference>
<dbReference type="Reactome" id="R-CEL-72702">
    <property type="pathway name" value="Ribosomal scanning and start codon recognition"/>
</dbReference>
<dbReference type="Reactome" id="R-CEL-72706">
    <property type="pathway name" value="GTP hydrolysis and joining of the 60S ribosomal subunit"/>
</dbReference>
<dbReference type="Reactome" id="R-CEL-975956">
    <property type="pathway name" value="Nonsense Mediated Decay (NMD) independent of the Exon Junction Complex (EJC)"/>
</dbReference>
<dbReference type="Reactome" id="R-CEL-975957">
    <property type="pathway name" value="Nonsense Mediated Decay (NMD) enhanced by the Exon Junction Complex (EJC)"/>
</dbReference>
<dbReference type="PRO" id="PR:O45499"/>
<dbReference type="Proteomes" id="UP000001940">
    <property type="component" value="Chromosome I"/>
</dbReference>
<dbReference type="Bgee" id="WBGene00004495">
    <property type="expression patterns" value="Expressed in germ line (C elegans) and 4 other cell types or tissues"/>
</dbReference>
<dbReference type="GO" id="GO:0098556">
    <property type="term" value="C:cytoplasmic side of rough endoplasmic reticulum membrane"/>
    <property type="evidence" value="ECO:0000250"/>
    <property type="project" value="UniProtKB"/>
</dbReference>
<dbReference type="GO" id="GO:0022627">
    <property type="term" value="C:cytosolic small ribosomal subunit"/>
    <property type="evidence" value="ECO:0000250"/>
    <property type="project" value="UniProtKB"/>
</dbReference>
<dbReference type="GO" id="GO:0005840">
    <property type="term" value="C:ribosome"/>
    <property type="evidence" value="ECO:0000250"/>
    <property type="project" value="UniProtKB"/>
</dbReference>
<dbReference type="GO" id="GO:0003729">
    <property type="term" value="F:mRNA binding"/>
    <property type="evidence" value="ECO:0000318"/>
    <property type="project" value="GO_Central"/>
</dbReference>
<dbReference type="GO" id="GO:0003735">
    <property type="term" value="F:structural constituent of ribosome"/>
    <property type="evidence" value="ECO:0000318"/>
    <property type="project" value="GO_Central"/>
</dbReference>
<dbReference type="GO" id="GO:0002181">
    <property type="term" value="P:cytoplasmic translation"/>
    <property type="evidence" value="ECO:0000250"/>
    <property type="project" value="UniProtKB"/>
</dbReference>
<dbReference type="GO" id="GO:0008340">
    <property type="term" value="P:determination of adult lifespan"/>
    <property type="evidence" value="ECO:0000315"/>
    <property type="project" value="WormBase"/>
</dbReference>
<dbReference type="FunFam" id="3.30.1740.20:FF:000001">
    <property type="entry name" value="40S ribosomal protein S26"/>
    <property type="match status" value="1"/>
</dbReference>
<dbReference type="Gene3D" id="3.30.1740.20">
    <property type="entry name" value="Ribosomal protein S26e"/>
    <property type="match status" value="1"/>
</dbReference>
<dbReference type="InterPro" id="IPR000892">
    <property type="entry name" value="Ribosomal_eS26"/>
</dbReference>
<dbReference type="InterPro" id="IPR047864">
    <property type="entry name" value="Ribosomal_eS26_CS"/>
</dbReference>
<dbReference type="InterPro" id="IPR038551">
    <property type="entry name" value="Ribosomal_eS26_sf"/>
</dbReference>
<dbReference type="PANTHER" id="PTHR12538">
    <property type="entry name" value="40S RIBOSOMAL PROTEIN S26"/>
    <property type="match status" value="1"/>
</dbReference>
<dbReference type="PANTHER" id="PTHR12538:SF0">
    <property type="entry name" value="40S RIBOSOMAL PROTEIN S26"/>
    <property type="match status" value="1"/>
</dbReference>
<dbReference type="Pfam" id="PF01283">
    <property type="entry name" value="Ribosomal_S26e"/>
    <property type="match status" value="1"/>
</dbReference>
<dbReference type="PROSITE" id="PS00733">
    <property type="entry name" value="RIBOSOMAL_S26E"/>
    <property type="match status" value="1"/>
</dbReference>
<comment type="subunit">
    <text evidence="1">Component of the 40S small ribosomal subunit.</text>
</comment>
<comment type="subcellular location">
    <subcellularLocation>
        <location evidence="2">Cytoplasm</location>
        <location evidence="2">Cytosol</location>
    </subcellularLocation>
    <subcellularLocation>
        <location evidence="2">Cytoplasm</location>
    </subcellularLocation>
    <subcellularLocation>
        <location evidence="1">Rough endoplasmic reticulum</location>
    </subcellularLocation>
    <text evidence="1 2">Detected on cytosolic polysomes (By similarity). Detected in ribosomes that are associated with the rough endoplasmic reticulum (By similarity).</text>
</comment>
<comment type="similarity">
    <text evidence="4">Belongs to the eukaryotic ribosomal protein eS26 family.</text>
</comment>
<accession>O45499</accession>
<organism>
    <name type="scientific">Caenorhabditis elegans</name>
    <dbReference type="NCBI Taxonomy" id="6239"/>
    <lineage>
        <taxon>Eukaryota</taxon>
        <taxon>Metazoa</taxon>
        <taxon>Ecdysozoa</taxon>
        <taxon>Nematoda</taxon>
        <taxon>Chromadorea</taxon>
        <taxon>Rhabditida</taxon>
        <taxon>Rhabditina</taxon>
        <taxon>Rhabditomorpha</taxon>
        <taxon>Rhabditoidea</taxon>
        <taxon>Rhabditidae</taxon>
        <taxon>Peloderinae</taxon>
        <taxon>Caenorhabditis</taxon>
    </lineage>
</organism>
<proteinExistence type="evidence at protein level"/>
<evidence type="ECO:0000250" key="1">
    <source>
        <dbReference type="UniProtKB" id="P49171"/>
    </source>
</evidence>
<evidence type="ECO:0000250" key="2">
    <source>
        <dbReference type="UniProtKB" id="P62854"/>
    </source>
</evidence>
<evidence type="ECO:0000256" key="3">
    <source>
        <dbReference type="SAM" id="MobiDB-lite"/>
    </source>
</evidence>
<evidence type="ECO:0000305" key="4"/>
<protein>
    <recommendedName>
        <fullName evidence="4">Small ribosomal subunit protein eS26</fullName>
    </recommendedName>
    <alternativeName>
        <fullName>40S ribosomal protein S26</fullName>
    </alternativeName>
</protein>
<name>RS26_CAEEL</name>
<keyword id="KW-0002">3D-structure</keyword>
<keyword id="KW-0963">Cytoplasm</keyword>
<keyword id="KW-0256">Endoplasmic reticulum</keyword>
<keyword id="KW-1185">Reference proteome</keyword>
<keyword id="KW-0687">Ribonucleoprotein</keyword>
<keyword id="KW-0689">Ribosomal protein</keyword>
<sequence>MTFKRRNHGRNKKNRGHVAFIRCTNCGRCCPKDKAIKKFVVRNIVEAAAVRDIGDASAYTQYALPKLYHKLHYCIACAIHSKVVRNRSREARRDRNPPPRFGQRAAAARPGAPGPRP</sequence>
<gene>
    <name type="primary">rps-26</name>
    <name type="ORF">F39B2.6</name>
</gene>
<reference key="1">
    <citation type="journal article" date="1998" name="Science">
        <title>Genome sequence of the nematode C. elegans: a platform for investigating biology.</title>
        <authorList>
            <consortium name="The C. elegans sequencing consortium"/>
        </authorList>
    </citation>
    <scope>NUCLEOTIDE SEQUENCE [LARGE SCALE GENOMIC DNA]</scope>
    <source>
        <strain>Bristol N2</strain>
    </source>
</reference>